<dbReference type="EC" id="2.7.-.-" evidence="1"/>
<dbReference type="EMBL" id="AE016795">
    <property type="protein sequence ID" value="AAO09409.1"/>
    <property type="molecule type" value="Genomic_DNA"/>
</dbReference>
<dbReference type="RefSeq" id="WP_011078973.1">
    <property type="nucleotide sequence ID" value="NC_004459.3"/>
</dbReference>
<dbReference type="SMR" id="Q8DDQ1"/>
<dbReference type="KEGG" id="vvu:VV1_0907"/>
<dbReference type="HOGENOM" id="CLU_006533_0_0_6"/>
<dbReference type="UniPathway" id="UPA00232"/>
<dbReference type="Proteomes" id="UP000002275">
    <property type="component" value="Chromosome 1"/>
</dbReference>
<dbReference type="GO" id="GO:0005886">
    <property type="term" value="C:plasma membrane"/>
    <property type="evidence" value="ECO:0007669"/>
    <property type="project" value="UniProtKB-SubCell"/>
</dbReference>
<dbReference type="GO" id="GO:0005524">
    <property type="term" value="F:ATP binding"/>
    <property type="evidence" value="ECO:0007669"/>
    <property type="project" value="UniProtKB-KW"/>
</dbReference>
<dbReference type="GO" id="GO:0004672">
    <property type="term" value="F:protein kinase activity"/>
    <property type="evidence" value="ECO:0007669"/>
    <property type="project" value="UniProtKB-UniRule"/>
</dbReference>
<dbReference type="GO" id="GO:0010795">
    <property type="term" value="P:regulation of ubiquinone biosynthetic process"/>
    <property type="evidence" value="ECO:0007669"/>
    <property type="project" value="UniProtKB-UniRule"/>
</dbReference>
<dbReference type="GO" id="GO:0006744">
    <property type="term" value="P:ubiquinone biosynthetic process"/>
    <property type="evidence" value="ECO:0007669"/>
    <property type="project" value="UniProtKB-UniPathway"/>
</dbReference>
<dbReference type="CDD" id="cd13972">
    <property type="entry name" value="UbiB"/>
    <property type="match status" value="1"/>
</dbReference>
<dbReference type="HAMAP" id="MF_00414">
    <property type="entry name" value="UbiB"/>
    <property type="match status" value="1"/>
</dbReference>
<dbReference type="InterPro" id="IPR004147">
    <property type="entry name" value="ABC1_dom"/>
</dbReference>
<dbReference type="InterPro" id="IPR011009">
    <property type="entry name" value="Kinase-like_dom_sf"/>
</dbReference>
<dbReference type="InterPro" id="IPR010232">
    <property type="entry name" value="UbiB"/>
</dbReference>
<dbReference type="InterPro" id="IPR045308">
    <property type="entry name" value="UbiB_bact"/>
</dbReference>
<dbReference type="InterPro" id="IPR050154">
    <property type="entry name" value="UbiB_kinase"/>
</dbReference>
<dbReference type="NCBIfam" id="NF003404">
    <property type="entry name" value="PRK04750.1"/>
    <property type="match status" value="1"/>
</dbReference>
<dbReference type="NCBIfam" id="TIGR01982">
    <property type="entry name" value="UbiB"/>
    <property type="match status" value="1"/>
</dbReference>
<dbReference type="PANTHER" id="PTHR10566">
    <property type="entry name" value="CHAPERONE-ACTIVITY OF BC1 COMPLEX CABC1 -RELATED"/>
    <property type="match status" value="1"/>
</dbReference>
<dbReference type="PANTHER" id="PTHR10566:SF113">
    <property type="entry name" value="PROTEIN ACTIVITY OF BC1 COMPLEX KINASE 7, CHLOROPLASTIC"/>
    <property type="match status" value="1"/>
</dbReference>
<dbReference type="Pfam" id="PF03109">
    <property type="entry name" value="ABC1"/>
    <property type="match status" value="1"/>
</dbReference>
<dbReference type="SUPFAM" id="SSF56112">
    <property type="entry name" value="Protein kinase-like (PK-like)"/>
    <property type="match status" value="1"/>
</dbReference>
<name>UBIB_VIBVU</name>
<gene>
    <name evidence="1" type="primary">ubiB</name>
    <name type="synonym">aarF</name>
    <name type="ordered locus">VV1_0907</name>
</gene>
<sequence length="544" mass="62547">MTPTELKRLYRIIKVQLEYGLDDLLPDHQLAKAPRWMRKSLFWLKNQHPEKPLGDRLRLALQELGPVWIKFGQMLSTRRDLFPPHIADPLALLQDQVSPFDGALAKAQMEQALGGPLETWFSDFDLVPLASASIAQVHTAKLKTTNQEVVLKVIRPDIRPIIDADLKLMRRMARIVAKAMPEARRLKPIEVVREYEKTLLDELDLRREAANAIQLRRNFTDSEELYVPEVYPDFSNETVMVSERIYGIQVSDIAGLKANGTNMKLLAERGVSVFFTQVFRDSFFHADMHPGNVFVNPEHPENPQWIGLDCGIVGTLNSEDKRYLAENFLAFFNRDYRRVAELHVDSGWVPADTNIDEFEFAIRIVCEPIFAKPLCEISFGHVLLNLFNTARRFNMEVQPQLVLLQKTLLYVEGLGRQLYPQLDLWETAKPFLEEWMMNQVGPKALINAIKDRAPYWAEKLPELPELLYDSLKQGKAMNQRMDQLYQGYRASKRQQATGKFLFGVGATLVVCSAILVDHTYEQLSLATAIAGVTFWLFSWRAYRR</sequence>
<protein>
    <recommendedName>
        <fullName evidence="1">Probable protein kinase UbiB</fullName>
        <ecNumber evidence="1">2.7.-.-</ecNumber>
    </recommendedName>
    <alternativeName>
        <fullName evidence="1">Ubiquinone biosynthesis protein UbiB</fullName>
    </alternativeName>
</protein>
<comment type="function">
    <text evidence="1">Is probably a protein kinase regulator of UbiI activity which is involved in aerobic coenzyme Q (ubiquinone) biosynthesis.</text>
</comment>
<comment type="pathway">
    <text>Cofactor biosynthesis; ubiquinone biosynthesis [regulation].</text>
</comment>
<comment type="subcellular location">
    <subcellularLocation>
        <location evidence="1">Cell inner membrane</location>
        <topology evidence="1">Multi-pass membrane protein</topology>
    </subcellularLocation>
</comment>
<comment type="similarity">
    <text evidence="1">Belongs to the ABC1 family. UbiB subfamily.</text>
</comment>
<proteinExistence type="inferred from homology"/>
<organism>
    <name type="scientific">Vibrio vulnificus (strain CMCP6)</name>
    <dbReference type="NCBI Taxonomy" id="216895"/>
    <lineage>
        <taxon>Bacteria</taxon>
        <taxon>Pseudomonadati</taxon>
        <taxon>Pseudomonadota</taxon>
        <taxon>Gammaproteobacteria</taxon>
        <taxon>Vibrionales</taxon>
        <taxon>Vibrionaceae</taxon>
        <taxon>Vibrio</taxon>
    </lineage>
</organism>
<evidence type="ECO:0000255" key="1">
    <source>
        <dbReference type="HAMAP-Rule" id="MF_00414"/>
    </source>
</evidence>
<keyword id="KW-0067">ATP-binding</keyword>
<keyword id="KW-0997">Cell inner membrane</keyword>
<keyword id="KW-1003">Cell membrane</keyword>
<keyword id="KW-0418">Kinase</keyword>
<keyword id="KW-0472">Membrane</keyword>
<keyword id="KW-0547">Nucleotide-binding</keyword>
<keyword id="KW-0808">Transferase</keyword>
<keyword id="KW-0812">Transmembrane</keyword>
<keyword id="KW-1133">Transmembrane helix</keyword>
<keyword id="KW-0831">Ubiquinone biosynthesis</keyword>
<feature type="chain" id="PRO_0000200722" description="Probable protein kinase UbiB">
    <location>
        <begin position="1"/>
        <end position="544"/>
    </location>
</feature>
<feature type="transmembrane region" description="Helical" evidence="1">
    <location>
        <begin position="496"/>
        <end position="516"/>
    </location>
</feature>
<feature type="transmembrane region" description="Helical" evidence="1">
    <location>
        <begin position="519"/>
        <end position="539"/>
    </location>
</feature>
<feature type="domain" description="Protein kinase" evidence="1">
    <location>
        <begin position="123"/>
        <end position="501"/>
    </location>
</feature>
<feature type="active site" description="Proton acceptor" evidence="1">
    <location>
        <position position="287"/>
    </location>
</feature>
<feature type="binding site" evidence="1">
    <location>
        <begin position="129"/>
        <end position="137"/>
    </location>
    <ligand>
        <name>ATP</name>
        <dbReference type="ChEBI" id="CHEBI:30616"/>
    </ligand>
</feature>
<feature type="binding site" evidence="1">
    <location>
        <position position="152"/>
    </location>
    <ligand>
        <name>ATP</name>
        <dbReference type="ChEBI" id="CHEBI:30616"/>
    </ligand>
</feature>
<accession>Q8DDQ1</accession>
<reference key="1">
    <citation type="submission" date="2002-12" db="EMBL/GenBank/DDBJ databases">
        <title>Complete genome sequence of Vibrio vulnificus CMCP6.</title>
        <authorList>
            <person name="Rhee J.H."/>
            <person name="Kim S.Y."/>
            <person name="Chung S.S."/>
            <person name="Kim J.J."/>
            <person name="Moon Y.H."/>
            <person name="Jeong H."/>
            <person name="Choy H.E."/>
        </authorList>
    </citation>
    <scope>NUCLEOTIDE SEQUENCE [LARGE SCALE GENOMIC DNA]</scope>
    <source>
        <strain>CMCP6</strain>
    </source>
</reference>